<reference key="1">
    <citation type="submission" date="2010-03" db="EMBL/GenBank/DDBJ databases">
        <title>Roles of Arabidopsis BOR2, an efflux-type boron transporter, in root elongation under conditions of boron limitation.</title>
        <authorList>
            <person name="Miwa K."/>
            <person name="Fujiwara T."/>
        </authorList>
    </citation>
    <scope>NUCLEOTIDE SEQUENCE [MRNA]</scope>
</reference>
<reference key="2">
    <citation type="journal article" date="2000" name="Nature">
        <title>Sequence and analysis of chromosome 5 of the plant Arabidopsis thaliana.</title>
        <authorList>
            <person name="Tabata S."/>
            <person name="Kaneko T."/>
            <person name="Nakamura Y."/>
            <person name="Kotani H."/>
            <person name="Kato T."/>
            <person name="Asamizu E."/>
            <person name="Miyajima N."/>
            <person name="Sasamoto S."/>
            <person name="Kimura T."/>
            <person name="Hosouchi T."/>
            <person name="Kawashima K."/>
            <person name="Kohara M."/>
            <person name="Matsumoto M."/>
            <person name="Matsuno A."/>
            <person name="Muraki A."/>
            <person name="Nakayama S."/>
            <person name="Nakazaki N."/>
            <person name="Naruo K."/>
            <person name="Okumura S."/>
            <person name="Shinpo S."/>
            <person name="Takeuchi C."/>
            <person name="Wada T."/>
            <person name="Watanabe A."/>
            <person name="Yamada M."/>
            <person name="Yasuda M."/>
            <person name="Sato S."/>
            <person name="de la Bastide M."/>
            <person name="Huang E."/>
            <person name="Spiegel L."/>
            <person name="Gnoj L."/>
            <person name="O'Shaughnessy A."/>
            <person name="Preston R."/>
            <person name="Habermann K."/>
            <person name="Murray J."/>
            <person name="Johnson D."/>
            <person name="Rohlfing T."/>
            <person name="Nelson J."/>
            <person name="Stoneking T."/>
            <person name="Pepin K."/>
            <person name="Spieth J."/>
            <person name="Sekhon M."/>
            <person name="Armstrong J."/>
            <person name="Becker M."/>
            <person name="Belter E."/>
            <person name="Cordum H."/>
            <person name="Cordes M."/>
            <person name="Courtney L."/>
            <person name="Courtney W."/>
            <person name="Dante M."/>
            <person name="Du H."/>
            <person name="Edwards J."/>
            <person name="Fryman J."/>
            <person name="Haakensen B."/>
            <person name="Lamar E."/>
            <person name="Latreille P."/>
            <person name="Leonard S."/>
            <person name="Meyer R."/>
            <person name="Mulvaney E."/>
            <person name="Ozersky P."/>
            <person name="Riley A."/>
            <person name="Strowmatt C."/>
            <person name="Wagner-McPherson C."/>
            <person name="Wollam A."/>
            <person name="Yoakum M."/>
            <person name="Bell M."/>
            <person name="Dedhia N."/>
            <person name="Parnell L."/>
            <person name="Shah R."/>
            <person name="Rodriguez M."/>
            <person name="Hoon See L."/>
            <person name="Vil D."/>
            <person name="Baker J."/>
            <person name="Kirchoff K."/>
            <person name="Toth K."/>
            <person name="King L."/>
            <person name="Bahret A."/>
            <person name="Miller B."/>
            <person name="Marra M.A."/>
            <person name="Martienssen R."/>
            <person name="McCombie W.R."/>
            <person name="Wilson R.K."/>
            <person name="Murphy G."/>
            <person name="Bancroft I."/>
            <person name="Volckaert G."/>
            <person name="Wambutt R."/>
            <person name="Duesterhoeft A."/>
            <person name="Stiekema W."/>
            <person name="Pohl T."/>
            <person name="Entian K.-D."/>
            <person name="Terryn N."/>
            <person name="Hartley N."/>
            <person name="Bent E."/>
            <person name="Johnson S."/>
            <person name="Langham S.-A."/>
            <person name="McCullagh B."/>
            <person name="Robben J."/>
            <person name="Grymonprez B."/>
            <person name="Zimmermann W."/>
            <person name="Ramsperger U."/>
            <person name="Wedler H."/>
            <person name="Balke K."/>
            <person name="Wedler E."/>
            <person name="Peters S."/>
            <person name="van Staveren M."/>
            <person name="Dirkse W."/>
            <person name="Mooijman P."/>
            <person name="Klein Lankhorst R."/>
            <person name="Weitzenegger T."/>
            <person name="Bothe G."/>
            <person name="Rose M."/>
            <person name="Hauf J."/>
            <person name="Berneiser S."/>
            <person name="Hempel S."/>
            <person name="Feldpausch M."/>
            <person name="Lamberth S."/>
            <person name="Villarroel R."/>
            <person name="Gielen J."/>
            <person name="Ardiles W."/>
            <person name="Bents O."/>
            <person name="Lemcke K."/>
            <person name="Kolesov G."/>
            <person name="Mayer K.F.X."/>
            <person name="Rudd S."/>
            <person name="Schoof H."/>
            <person name="Schueller C."/>
            <person name="Zaccaria P."/>
            <person name="Mewes H.-W."/>
            <person name="Bevan M."/>
            <person name="Fransz P.F."/>
        </authorList>
    </citation>
    <scope>NUCLEOTIDE SEQUENCE [LARGE SCALE GENOMIC DNA]</scope>
    <source>
        <strain>cv. Columbia</strain>
    </source>
</reference>
<reference key="3">
    <citation type="journal article" date="2017" name="Plant J.">
        <title>Araport11: a complete reannotation of the Arabidopsis thaliana reference genome.</title>
        <authorList>
            <person name="Cheng C.Y."/>
            <person name="Krishnakumar V."/>
            <person name="Chan A.P."/>
            <person name="Thibaud-Nissen F."/>
            <person name="Schobel S."/>
            <person name="Town C.D."/>
        </authorList>
    </citation>
    <scope>GENOME REANNOTATION</scope>
    <source>
        <strain>cv. Columbia</strain>
    </source>
</reference>
<reference key="4">
    <citation type="journal article" date="2002" name="Nature">
        <title>Arabidopsis boron transporter for xylem loading.</title>
        <authorList>
            <person name="Takano J."/>
            <person name="Noguchi K."/>
            <person name="Yasumori M."/>
            <person name="Kobayashi M."/>
            <person name="Gajdos Z."/>
            <person name="Miwa K."/>
            <person name="Hayashi H."/>
            <person name="Yoneyama T."/>
            <person name="Fujiwara T."/>
        </authorList>
    </citation>
    <scope>GENE FAMILY</scope>
</reference>
<name>BOR6_ARATH</name>
<dbReference type="EMBL" id="GU971377">
    <property type="protein sequence ID" value="ADF49545.1"/>
    <property type="molecule type" value="mRNA"/>
</dbReference>
<dbReference type="EMBL" id="AC006258">
    <property type="status" value="NOT_ANNOTATED_CDS"/>
    <property type="molecule type" value="Genomic_DNA"/>
</dbReference>
<dbReference type="EMBL" id="CP002688">
    <property type="protein sequence ID" value="AED93442.1"/>
    <property type="molecule type" value="Genomic_DNA"/>
</dbReference>
<dbReference type="RefSeq" id="NP_001318647.1">
    <property type="nucleotide sequence ID" value="NM_001343926.1"/>
</dbReference>
<dbReference type="SMR" id="Q3E954"/>
<dbReference type="FunCoup" id="Q3E954">
    <property type="interactions" value="384"/>
</dbReference>
<dbReference type="STRING" id="3702.Q3E954"/>
<dbReference type="PaxDb" id="3702-AT5G25430.1"/>
<dbReference type="ProteomicsDB" id="240360"/>
<dbReference type="EnsemblPlants" id="AT5G25430.1">
    <property type="protein sequence ID" value="AT5G25430.1"/>
    <property type="gene ID" value="AT5G25430"/>
</dbReference>
<dbReference type="GeneID" id="832617"/>
<dbReference type="Gramene" id="AT5G25430.1">
    <property type="protein sequence ID" value="AT5G25430.1"/>
    <property type="gene ID" value="AT5G25430"/>
</dbReference>
<dbReference type="KEGG" id="ath:AT5G25430"/>
<dbReference type="Araport" id="AT5G25430"/>
<dbReference type="TAIR" id="AT5G25430"/>
<dbReference type="eggNOG" id="KOG1172">
    <property type="taxonomic scope" value="Eukaryota"/>
</dbReference>
<dbReference type="HOGENOM" id="CLU_002289_3_2_1"/>
<dbReference type="InParanoid" id="Q3E954"/>
<dbReference type="OMA" id="QFWERTQ"/>
<dbReference type="PhylomeDB" id="Q3E954"/>
<dbReference type="PRO" id="PR:Q3E954"/>
<dbReference type="Proteomes" id="UP000006548">
    <property type="component" value="Chromosome 5"/>
</dbReference>
<dbReference type="ExpressionAtlas" id="Q3E954">
    <property type="expression patterns" value="baseline and differential"/>
</dbReference>
<dbReference type="GO" id="GO:0016020">
    <property type="term" value="C:membrane"/>
    <property type="evidence" value="ECO:0007669"/>
    <property type="project" value="UniProtKB-SubCell"/>
</dbReference>
<dbReference type="GO" id="GO:0005452">
    <property type="term" value="F:solute:inorganic anion antiporter activity"/>
    <property type="evidence" value="ECO:0007669"/>
    <property type="project" value="InterPro"/>
</dbReference>
<dbReference type="GO" id="GO:0006820">
    <property type="term" value="P:monoatomic anion transport"/>
    <property type="evidence" value="ECO:0007669"/>
    <property type="project" value="InterPro"/>
</dbReference>
<dbReference type="Gene3D" id="1.10.287.570">
    <property type="entry name" value="Helical hairpin bin"/>
    <property type="match status" value="1"/>
</dbReference>
<dbReference type="InterPro" id="IPR011531">
    <property type="entry name" value="HCO3_transpt-like_TM_dom"/>
</dbReference>
<dbReference type="InterPro" id="IPR003020">
    <property type="entry name" value="HCO3_transpt_euk"/>
</dbReference>
<dbReference type="PANTHER" id="PTHR11453">
    <property type="entry name" value="ANION EXCHANGE PROTEIN"/>
    <property type="match status" value="1"/>
</dbReference>
<dbReference type="PANTHER" id="PTHR11453:SF124">
    <property type="entry name" value="BORON TRANSPORTER 6-RELATED"/>
    <property type="match status" value="1"/>
</dbReference>
<dbReference type="Pfam" id="PF00955">
    <property type="entry name" value="HCO3_cotransp"/>
    <property type="match status" value="3"/>
</dbReference>
<accession>Q3E954</accession>
<accession>D5LUP5</accession>
<evidence type="ECO:0000250" key="1"/>
<evidence type="ECO:0000255" key="2"/>
<evidence type="ECO:0000305" key="3"/>
<comment type="function">
    <text evidence="1">Probable boron transporter. Boron is essential for maintaining the integrity of plants cell walls (By similarity).</text>
</comment>
<comment type="subcellular location">
    <subcellularLocation>
        <location evidence="1">Membrane</location>
        <topology evidence="1">Multi-pass membrane protein</topology>
    </subcellularLocation>
</comment>
<comment type="similarity">
    <text evidence="3">Belongs to the anion exchanger (TC 2.A.31.3) family.</text>
</comment>
<sequence>MKSEGESGPFQGILRDIEGRRKCYKQDWIRGIKTGIRILAPTCYIFFASSLPVVAFGEQLSKHTGGALSAVETLASTSICGIIHAIFGGQPLLIVGVAEPTIIMYTYLYSFCISRPDIGRELYLAWVAWVCVWTSVLLILLSIFNAGTIITRFTRIAGELFGMLIAVLFLQEAIKGLISEFHAPEIKNQETGKSHFLLIYANGLLAVIFSLGLLITALKSRRAKSWKYGFGWLRSFIGDYGVPLMVLLWTALSYTVPSEVLPSVPRRLFCPLPWEPASLYHWTVVKDMGKVPIMYILAAFIPGVMIAGLYFFDHSVASQMAQQKEFNLKNPSAYHYDIFLLGIITLICGLLGLPPSNGVLPQAPMHTKSLAVLNRQLIRKKMVKKAKECMKMKASKSEIYGRMQSVFIEMETSPPQDNSVATDLKELKEVVMRPDEGGDTKGKFDPDVHIEANLPVRVNEQRVSNLLQSVLVGLTLLAVTVIKMIPSSVLWGYFAYMAIDSLPGNQFWERLLLLFIPPSRLFKVLEGVHASFVELVPYRVIVTFTLFQLVYFLLCYGMTWIPMAGIFFPALFFLLISIREHLLPKLFDMQHLQVLDASDYEEIVAAPIQHSSFAYRKLGSSHHLSEGEDEFYDAEILDEMTTSRGEIRIRTISFKEVHPEPEEKHVTFEPH</sequence>
<proteinExistence type="evidence at transcript level"/>
<feature type="chain" id="PRO_0000393385" description="Probable boron transporter 6">
    <location>
        <begin position="1"/>
        <end position="671"/>
    </location>
</feature>
<feature type="topological domain" description="Cytoplasmic" evidence="2">
    <location>
        <begin position="1"/>
        <end position="37"/>
    </location>
</feature>
<feature type="transmembrane region" description="Helical" evidence="2">
    <location>
        <begin position="38"/>
        <end position="58"/>
    </location>
</feature>
<feature type="topological domain" description="Extracellular" evidence="2">
    <location>
        <begin position="59"/>
        <end position="77"/>
    </location>
</feature>
<feature type="transmembrane region" description="Helical" evidence="2">
    <location>
        <begin position="78"/>
        <end position="98"/>
    </location>
</feature>
<feature type="topological domain" description="Cytoplasmic" evidence="2">
    <location>
        <begin position="99"/>
        <end position="123"/>
    </location>
</feature>
<feature type="transmembrane region" description="Helical" evidence="2">
    <location>
        <begin position="124"/>
        <end position="144"/>
    </location>
</feature>
<feature type="topological domain" description="Extracellular" evidence="2">
    <location>
        <begin position="145"/>
        <end position="157"/>
    </location>
</feature>
<feature type="transmembrane region" description="Helical" evidence="2">
    <location>
        <begin position="158"/>
        <end position="178"/>
    </location>
</feature>
<feature type="topological domain" description="Cytoplasmic" evidence="2">
    <location>
        <begin position="179"/>
        <end position="195"/>
    </location>
</feature>
<feature type="transmembrane region" description="Helical" evidence="2">
    <location>
        <begin position="196"/>
        <end position="216"/>
    </location>
</feature>
<feature type="topological domain" description="Extracellular" evidence="2">
    <location>
        <begin position="217"/>
        <end position="235"/>
    </location>
</feature>
<feature type="transmembrane region" description="Helical" evidence="2">
    <location>
        <begin position="236"/>
        <end position="256"/>
    </location>
</feature>
<feature type="topological domain" description="Cytoplasmic" evidence="2">
    <location>
        <begin position="257"/>
        <end position="291"/>
    </location>
</feature>
<feature type="transmembrane region" description="Helical" evidence="2">
    <location>
        <begin position="292"/>
        <end position="312"/>
    </location>
</feature>
<feature type="topological domain" description="Extracellular" evidence="2">
    <location>
        <begin position="313"/>
        <end position="332"/>
    </location>
</feature>
<feature type="transmembrane region" description="Helical" evidence="2">
    <location>
        <begin position="333"/>
        <end position="353"/>
    </location>
</feature>
<feature type="topological domain" description="Cytoplasmic" evidence="2">
    <location>
        <begin position="354"/>
        <end position="469"/>
    </location>
</feature>
<feature type="transmembrane region" description="Helical" evidence="2">
    <location>
        <begin position="470"/>
        <end position="490"/>
    </location>
</feature>
<feature type="topological domain" description="Extracellular" evidence="2">
    <location>
        <begin position="491"/>
        <end position="557"/>
    </location>
</feature>
<feature type="transmembrane region" description="Helical" evidence="2">
    <location>
        <begin position="558"/>
        <end position="578"/>
    </location>
</feature>
<feature type="topological domain" description="Cytoplasmic" evidence="2">
    <location>
        <begin position="579"/>
        <end position="671"/>
    </location>
</feature>
<keyword id="KW-0039">Anion exchange</keyword>
<keyword id="KW-0406">Ion transport</keyword>
<keyword id="KW-0472">Membrane</keyword>
<keyword id="KW-1185">Reference proteome</keyword>
<keyword id="KW-0812">Transmembrane</keyword>
<keyword id="KW-1133">Transmembrane helix</keyword>
<keyword id="KW-0813">Transport</keyword>
<protein>
    <recommendedName>
        <fullName>Probable boron transporter 6</fullName>
    </recommendedName>
</protein>
<organism>
    <name type="scientific">Arabidopsis thaliana</name>
    <name type="common">Mouse-ear cress</name>
    <dbReference type="NCBI Taxonomy" id="3702"/>
    <lineage>
        <taxon>Eukaryota</taxon>
        <taxon>Viridiplantae</taxon>
        <taxon>Streptophyta</taxon>
        <taxon>Embryophyta</taxon>
        <taxon>Tracheophyta</taxon>
        <taxon>Spermatophyta</taxon>
        <taxon>Magnoliopsida</taxon>
        <taxon>eudicotyledons</taxon>
        <taxon>Gunneridae</taxon>
        <taxon>Pentapetalae</taxon>
        <taxon>rosids</taxon>
        <taxon>malvids</taxon>
        <taxon>Brassicales</taxon>
        <taxon>Brassicaceae</taxon>
        <taxon>Camelineae</taxon>
        <taxon>Arabidopsis</taxon>
    </lineage>
</organism>
<gene>
    <name type="primary">BOR6</name>
    <name type="ordered locus">At5g25430</name>
    <name type="ORF">F18G18.170</name>
</gene>